<name>RADA_METBF</name>
<keyword id="KW-0067">ATP-binding</keyword>
<keyword id="KW-0227">DNA damage</keyword>
<keyword id="KW-0233">DNA recombination</keyword>
<keyword id="KW-0238">DNA-binding</keyword>
<keyword id="KW-0547">Nucleotide-binding</keyword>
<gene>
    <name evidence="1" type="primary">radA</name>
    <name type="ordered locus">Mbar_A2338</name>
</gene>
<sequence>MSQITLEELPGVGPATAEKLKEAGFNTIEAVAVASPSELATTAEIGESTAAKIINAARQAADIGGFETGDIVLERRKMVGKLTTGCMEFDEMMGGGIETQAITELYGEFGSGKTQLAHQFAVNVQMDREHGGLNGSVIIIDTENTFRPERIAQMVKGLSEKYGMELDPEEFLQNIHVARAYNSNHQILLVDSATDLANELREMGKPVRLLIVDSLMAHFRAEYVGRGTLADRQQKLNKHMHGLLRFGDLFNASVVVTNQVMAKPDAFFGDPTRPVGGHVVGHTATFRLYLRKSKGDKRIIRLVDSPNLPEGEAVIAVTTAGLTDQ</sequence>
<dbReference type="EMBL" id="CP000099">
    <property type="protein sequence ID" value="AAZ71261.1"/>
    <property type="molecule type" value="Genomic_DNA"/>
</dbReference>
<dbReference type="SMR" id="Q46A31"/>
<dbReference type="STRING" id="269797.Mbar_A2338"/>
<dbReference type="PaxDb" id="269797-Mbar_A2338"/>
<dbReference type="KEGG" id="mba:Mbar_A2338"/>
<dbReference type="eggNOG" id="arCOG00415">
    <property type="taxonomic scope" value="Archaea"/>
</dbReference>
<dbReference type="HOGENOM" id="CLU_041732_0_0_2"/>
<dbReference type="OrthoDB" id="31129at2157"/>
<dbReference type="GO" id="GO:0005524">
    <property type="term" value="F:ATP binding"/>
    <property type="evidence" value="ECO:0007669"/>
    <property type="project" value="UniProtKB-UniRule"/>
</dbReference>
<dbReference type="GO" id="GO:0016887">
    <property type="term" value="F:ATP hydrolysis activity"/>
    <property type="evidence" value="ECO:0007669"/>
    <property type="project" value="InterPro"/>
</dbReference>
<dbReference type="GO" id="GO:0140664">
    <property type="term" value="F:ATP-dependent DNA damage sensor activity"/>
    <property type="evidence" value="ECO:0007669"/>
    <property type="project" value="InterPro"/>
</dbReference>
<dbReference type="GO" id="GO:0003684">
    <property type="term" value="F:damaged DNA binding"/>
    <property type="evidence" value="ECO:0007669"/>
    <property type="project" value="UniProtKB-UniRule"/>
</dbReference>
<dbReference type="GO" id="GO:0006310">
    <property type="term" value="P:DNA recombination"/>
    <property type="evidence" value="ECO:0007669"/>
    <property type="project" value="UniProtKB-UniRule"/>
</dbReference>
<dbReference type="GO" id="GO:0006281">
    <property type="term" value="P:DNA repair"/>
    <property type="evidence" value="ECO:0007669"/>
    <property type="project" value="UniProtKB-UniRule"/>
</dbReference>
<dbReference type="CDD" id="cd19515">
    <property type="entry name" value="archRadA"/>
    <property type="match status" value="1"/>
</dbReference>
<dbReference type="FunFam" id="3.40.50.300:FF:002052">
    <property type="entry name" value="DNA repair protein RAD51 homolog"/>
    <property type="match status" value="1"/>
</dbReference>
<dbReference type="Gene3D" id="1.10.150.20">
    <property type="entry name" value="5' to 3' exonuclease, C-terminal subdomain"/>
    <property type="match status" value="1"/>
</dbReference>
<dbReference type="Gene3D" id="3.40.50.300">
    <property type="entry name" value="P-loop containing nucleotide triphosphate hydrolases"/>
    <property type="match status" value="1"/>
</dbReference>
<dbReference type="HAMAP" id="MF_00348">
    <property type="entry name" value="RadA_arch"/>
    <property type="match status" value="1"/>
</dbReference>
<dbReference type="InterPro" id="IPR003593">
    <property type="entry name" value="AAA+_ATPase"/>
</dbReference>
<dbReference type="InterPro" id="IPR013632">
    <property type="entry name" value="DNA_recomb/repair_Rad51_C"/>
</dbReference>
<dbReference type="InterPro" id="IPR011938">
    <property type="entry name" value="DNA_recomb/repair_RadA"/>
</dbReference>
<dbReference type="InterPro" id="IPR016467">
    <property type="entry name" value="DNA_recomb/repair_RecA-like"/>
</dbReference>
<dbReference type="InterPro" id="IPR010995">
    <property type="entry name" value="DNA_repair_Rad51/TF_NusA_a-hlx"/>
</dbReference>
<dbReference type="InterPro" id="IPR003583">
    <property type="entry name" value="Hlx-hairpin-Hlx_DNA-bd_motif"/>
</dbReference>
<dbReference type="InterPro" id="IPR027417">
    <property type="entry name" value="P-loop_NTPase"/>
</dbReference>
<dbReference type="InterPro" id="IPR020588">
    <property type="entry name" value="RecA_ATP-bd"/>
</dbReference>
<dbReference type="InterPro" id="IPR020587">
    <property type="entry name" value="RecA_monomer-monomer_interface"/>
</dbReference>
<dbReference type="NCBIfam" id="NF003301">
    <property type="entry name" value="PRK04301.1"/>
    <property type="match status" value="1"/>
</dbReference>
<dbReference type="NCBIfam" id="TIGR02236">
    <property type="entry name" value="recomb_radA"/>
    <property type="match status" value="1"/>
</dbReference>
<dbReference type="PANTHER" id="PTHR22942:SF30">
    <property type="entry name" value="MEIOTIC RECOMBINATION PROTEIN DMC1_LIM15 HOMOLOG"/>
    <property type="match status" value="1"/>
</dbReference>
<dbReference type="PANTHER" id="PTHR22942">
    <property type="entry name" value="RECA/RAD51/RADA DNA STRAND-PAIRING FAMILY MEMBER"/>
    <property type="match status" value="1"/>
</dbReference>
<dbReference type="Pfam" id="PF14520">
    <property type="entry name" value="HHH_5"/>
    <property type="match status" value="1"/>
</dbReference>
<dbReference type="Pfam" id="PF08423">
    <property type="entry name" value="Rad51"/>
    <property type="match status" value="1"/>
</dbReference>
<dbReference type="PIRSF" id="PIRSF005856">
    <property type="entry name" value="Rad51"/>
    <property type="match status" value="1"/>
</dbReference>
<dbReference type="SMART" id="SM00382">
    <property type="entry name" value="AAA"/>
    <property type="match status" value="1"/>
</dbReference>
<dbReference type="SMART" id="SM00278">
    <property type="entry name" value="HhH1"/>
    <property type="match status" value="2"/>
</dbReference>
<dbReference type="SUPFAM" id="SSF52540">
    <property type="entry name" value="P-loop containing nucleoside triphosphate hydrolases"/>
    <property type="match status" value="1"/>
</dbReference>
<dbReference type="SUPFAM" id="SSF47794">
    <property type="entry name" value="Rad51 N-terminal domain-like"/>
    <property type="match status" value="1"/>
</dbReference>
<dbReference type="PROSITE" id="PS50162">
    <property type="entry name" value="RECA_2"/>
    <property type="match status" value="1"/>
</dbReference>
<dbReference type="PROSITE" id="PS50163">
    <property type="entry name" value="RECA_3"/>
    <property type="match status" value="1"/>
</dbReference>
<feature type="chain" id="PRO_1000048385" description="DNA repair and recombination protein RadA">
    <location>
        <begin position="1"/>
        <end position="325"/>
    </location>
</feature>
<feature type="binding site" evidence="1">
    <location>
        <begin position="107"/>
        <end position="114"/>
    </location>
    <ligand>
        <name>ATP</name>
        <dbReference type="ChEBI" id="CHEBI:30616"/>
    </ligand>
</feature>
<proteinExistence type="inferred from homology"/>
<organism>
    <name type="scientific">Methanosarcina barkeri (strain Fusaro / DSM 804)</name>
    <dbReference type="NCBI Taxonomy" id="269797"/>
    <lineage>
        <taxon>Archaea</taxon>
        <taxon>Methanobacteriati</taxon>
        <taxon>Methanobacteriota</taxon>
        <taxon>Stenosarchaea group</taxon>
        <taxon>Methanomicrobia</taxon>
        <taxon>Methanosarcinales</taxon>
        <taxon>Methanosarcinaceae</taxon>
        <taxon>Methanosarcina</taxon>
    </lineage>
</organism>
<protein>
    <recommendedName>
        <fullName evidence="1">DNA repair and recombination protein RadA</fullName>
    </recommendedName>
</protein>
<evidence type="ECO:0000255" key="1">
    <source>
        <dbReference type="HAMAP-Rule" id="MF_00348"/>
    </source>
</evidence>
<reference key="1">
    <citation type="journal article" date="2006" name="J. Bacteriol.">
        <title>The Methanosarcina barkeri genome: comparative analysis with Methanosarcina acetivorans and Methanosarcina mazei reveals extensive rearrangement within methanosarcinal genomes.</title>
        <authorList>
            <person name="Maeder D.L."/>
            <person name="Anderson I."/>
            <person name="Brettin T.S."/>
            <person name="Bruce D.C."/>
            <person name="Gilna P."/>
            <person name="Han C.S."/>
            <person name="Lapidus A."/>
            <person name="Metcalf W.W."/>
            <person name="Saunders E."/>
            <person name="Tapia R."/>
            <person name="Sowers K.R."/>
        </authorList>
    </citation>
    <scope>NUCLEOTIDE SEQUENCE [LARGE SCALE GENOMIC DNA]</scope>
    <source>
        <strain>Fusaro / DSM 804</strain>
    </source>
</reference>
<comment type="function">
    <text evidence="1">Involved in DNA repair and in homologous recombination. Binds and assemble on single-stranded DNA to form a nucleoprotein filament. Hydrolyzes ATP in a ssDNA-dependent manner and promotes DNA strand exchange between homologous DNA molecules.</text>
</comment>
<comment type="similarity">
    <text evidence="1">Belongs to the eukaryotic RecA-like protein family.</text>
</comment>
<accession>Q46A31</accession>